<proteinExistence type="inferred from homology"/>
<sequence length="156" mass="16990">MNINLTLIGQAIAFAFFVAFCMKFVWPPLINAISERQRKIADGLNAAEKAKADLADAQAQVKQELDAAKAQAAQLIEQANRRAAQLIEEARTQAAAEGERIRQQAKEAVDQEINSAREELRQQVAALAVTGAEKILNQQVDAEAHNAMLSQLAAKL</sequence>
<evidence type="ECO:0000255" key="1">
    <source>
        <dbReference type="HAMAP-Rule" id="MF_01398"/>
    </source>
</evidence>
<gene>
    <name evidence="1" type="primary">atpF</name>
    <name type="ordered locus">ABBFA_003369</name>
</gene>
<keyword id="KW-0066">ATP synthesis</keyword>
<keyword id="KW-0997">Cell inner membrane</keyword>
<keyword id="KW-1003">Cell membrane</keyword>
<keyword id="KW-0138">CF(0)</keyword>
<keyword id="KW-0375">Hydrogen ion transport</keyword>
<keyword id="KW-0406">Ion transport</keyword>
<keyword id="KW-0472">Membrane</keyword>
<keyword id="KW-0812">Transmembrane</keyword>
<keyword id="KW-1133">Transmembrane helix</keyword>
<keyword id="KW-0813">Transport</keyword>
<organism>
    <name type="scientific">Acinetobacter baumannii (strain AB307-0294)</name>
    <dbReference type="NCBI Taxonomy" id="557600"/>
    <lineage>
        <taxon>Bacteria</taxon>
        <taxon>Pseudomonadati</taxon>
        <taxon>Pseudomonadota</taxon>
        <taxon>Gammaproteobacteria</taxon>
        <taxon>Moraxellales</taxon>
        <taxon>Moraxellaceae</taxon>
        <taxon>Acinetobacter</taxon>
        <taxon>Acinetobacter calcoaceticus/baumannii complex</taxon>
    </lineage>
</organism>
<comment type="function">
    <text evidence="1">F(1)F(0) ATP synthase produces ATP from ADP in the presence of a proton or sodium gradient. F-type ATPases consist of two structural domains, F(1) containing the extramembraneous catalytic core and F(0) containing the membrane proton channel, linked together by a central stalk and a peripheral stalk. During catalysis, ATP synthesis in the catalytic domain of F(1) is coupled via a rotary mechanism of the central stalk subunits to proton translocation.</text>
</comment>
<comment type="function">
    <text evidence="1">Component of the F(0) channel, it forms part of the peripheral stalk, linking F(1) to F(0).</text>
</comment>
<comment type="subunit">
    <text evidence="1">F-type ATPases have 2 components, F(1) - the catalytic core - and F(0) - the membrane proton channel. F(1) has five subunits: alpha(3), beta(3), gamma(1), delta(1), epsilon(1). F(0) has three main subunits: a(1), b(2) and c(10-14). The alpha and beta chains form an alternating ring which encloses part of the gamma chain. F(1) is attached to F(0) by a central stalk formed by the gamma and epsilon chains, while a peripheral stalk is formed by the delta and b chains.</text>
</comment>
<comment type="subcellular location">
    <subcellularLocation>
        <location evidence="1">Cell inner membrane</location>
        <topology evidence="1">Single-pass membrane protein</topology>
    </subcellularLocation>
</comment>
<comment type="similarity">
    <text evidence="1">Belongs to the ATPase B chain family.</text>
</comment>
<feature type="chain" id="PRO_0000368289" description="ATP synthase subunit b">
    <location>
        <begin position="1"/>
        <end position="156"/>
    </location>
</feature>
<feature type="transmembrane region" description="Helical" evidence="1">
    <location>
        <begin position="5"/>
        <end position="25"/>
    </location>
</feature>
<name>ATPF_ACIB3</name>
<reference key="1">
    <citation type="journal article" date="2008" name="J. Bacteriol.">
        <title>Comparative genome sequence analysis of multidrug-resistant Acinetobacter baumannii.</title>
        <authorList>
            <person name="Adams M.D."/>
            <person name="Goglin K."/>
            <person name="Molyneaux N."/>
            <person name="Hujer K.M."/>
            <person name="Lavender H."/>
            <person name="Jamison J.J."/>
            <person name="MacDonald I.J."/>
            <person name="Martin K.M."/>
            <person name="Russo T."/>
            <person name="Campagnari A.A."/>
            <person name="Hujer A.M."/>
            <person name="Bonomo R.A."/>
            <person name="Gill S.R."/>
        </authorList>
    </citation>
    <scope>NUCLEOTIDE SEQUENCE [LARGE SCALE GENOMIC DNA]</scope>
    <source>
        <strain>AB307-0294</strain>
    </source>
</reference>
<dbReference type="EMBL" id="CP001172">
    <property type="protein sequence ID" value="ACJ59303.1"/>
    <property type="molecule type" value="Genomic_DNA"/>
</dbReference>
<dbReference type="RefSeq" id="WP_001024691.1">
    <property type="nucleotide sequence ID" value="NZ_CP001172.1"/>
</dbReference>
<dbReference type="SMR" id="B7H298"/>
<dbReference type="HOGENOM" id="CLU_079215_4_5_6"/>
<dbReference type="Proteomes" id="UP000006924">
    <property type="component" value="Chromosome"/>
</dbReference>
<dbReference type="GO" id="GO:0005886">
    <property type="term" value="C:plasma membrane"/>
    <property type="evidence" value="ECO:0007669"/>
    <property type="project" value="UniProtKB-SubCell"/>
</dbReference>
<dbReference type="GO" id="GO:0045259">
    <property type="term" value="C:proton-transporting ATP synthase complex"/>
    <property type="evidence" value="ECO:0007669"/>
    <property type="project" value="UniProtKB-KW"/>
</dbReference>
<dbReference type="GO" id="GO:0046933">
    <property type="term" value="F:proton-transporting ATP synthase activity, rotational mechanism"/>
    <property type="evidence" value="ECO:0007669"/>
    <property type="project" value="UniProtKB-UniRule"/>
</dbReference>
<dbReference type="GO" id="GO:0046961">
    <property type="term" value="F:proton-transporting ATPase activity, rotational mechanism"/>
    <property type="evidence" value="ECO:0007669"/>
    <property type="project" value="TreeGrafter"/>
</dbReference>
<dbReference type="CDD" id="cd06503">
    <property type="entry name" value="ATP-synt_Fo_b"/>
    <property type="match status" value="1"/>
</dbReference>
<dbReference type="FunFam" id="1.20.5.620:FF:000001">
    <property type="entry name" value="ATP synthase subunit b"/>
    <property type="match status" value="1"/>
</dbReference>
<dbReference type="Gene3D" id="6.10.250.1580">
    <property type="match status" value="1"/>
</dbReference>
<dbReference type="HAMAP" id="MF_01398">
    <property type="entry name" value="ATP_synth_b_bprime"/>
    <property type="match status" value="1"/>
</dbReference>
<dbReference type="InterPro" id="IPR028987">
    <property type="entry name" value="ATP_synth_B-like_membr_sf"/>
</dbReference>
<dbReference type="InterPro" id="IPR002146">
    <property type="entry name" value="ATP_synth_b/b'su_bac/chlpt"/>
</dbReference>
<dbReference type="InterPro" id="IPR005864">
    <property type="entry name" value="ATP_synth_F0_bsu_bac"/>
</dbReference>
<dbReference type="InterPro" id="IPR050059">
    <property type="entry name" value="ATP_synthase_B_chain"/>
</dbReference>
<dbReference type="NCBIfam" id="TIGR01144">
    <property type="entry name" value="ATP_synt_b"/>
    <property type="match status" value="1"/>
</dbReference>
<dbReference type="NCBIfam" id="NF004411">
    <property type="entry name" value="PRK05759.1-2"/>
    <property type="match status" value="1"/>
</dbReference>
<dbReference type="PANTHER" id="PTHR33445:SF1">
    <property type="entry name" value="ATP SYNTHASE SUBUNIT B"/>
    <property type="match status" value="1"/>
</dbReference>
<dbReference type="PANTHER" id="PTHR33445">
    <property type="entry name" value="ATP SYNTHASE SUBUNIT B', CHLOROPLASTIC"/>
    <property type="match status" value="1"/>
</dbReference>
<dbReference type="Pfam" id="PF00430">
    <property type="entry name" value="ATP-synt_B"/>
    <property type="match status" value="1"/>
</dbReference>
<dbReference type="SUPFAM" id="SSF81573">
    <property type="entry name" value="F1F0 ATP synthase subunit B, membrane domain"/>
    <property type="match status" value="1"/>
</dbReference>
<protein>
    <recommendedName>
        <fullName evidence="1">ATP synthase subunit b</fullName>
    </recommendedName>
    <alternativeName>
        <fullName evidence="1">ATP synthase F(0) sector subunit b</fullName>
    </alternativeName>
    <alternativeName>
        <fullName evidence="1">ATPase subunit I</fullName>
    </alternativeName>
    <alternativeName>
        <fullName evidence="1">F-type ATPase subunit b</fullName>
        <shortName evidence="1">F-ATPase subunit b</shortName>
    </alternativeName>
</protein>
<accession>B7H298</accession>